<keyword id="KW-0489">Methyltransferase</keyword>
<keyword id="KW-0949">S-adenosyl-L-methionine</keyword>
<keyword id="KW-0808">Transferase</keyword>
<proteinExistence type="evidence at transcript level"/>
<name>OMT3_HUMLU</name>
<feature type="chain" id="PRO_0000439266" description="Probable O-methyltransferase 3">
    <location>
        <begin position="1"/>
        <end position="377"/>
    </location>
</feature>
<feature type="active site" description="Proton acceptor" evidence="1">
    <location>
        <position position="279"/>
    </location>
</feature>
<feature type="binding site" evidence="1">
    <location>
        <position position="241"/>
    </location>
    <ligand>
        <name>S-adenosyl-L-methionine</name>
        <dbReference type="ChEBI" id="CHEBI:59789"/>
    </ligand>
</feature>
<comment type="tissue specificity">
    <text evidence="2">Highly expressed in lupulin glands. Detected in early-, mid- and late-stage cones.</text>
</comment>
<comment type="similarity">
    <text evidence="4">Belongs to the class I-like SAM-binding methyltransferase superfamily. Cation-independent O-methyltransferase family.</text>
</comment>
<sequence length="377" mass="42128">MEKLKSFRHLNNNIDLILNEENSTEILGAQAHIWNQIFNFINSMSLKCAIQLGIPDIINNHGKPMTISQLTLALPINRKKSPCVYRLMRILIHSGFFALQKAEVGEEGGGEEEGYVITDASKLLLKDNPMSVTPFLLAMLDPVMTKPWDFLSNWFQNGDPTPFDTANGMAFWDYGSHEPKLARFFNDAMASDARLVTSVVIEKCKGVFEGVESLVDVGGGTGTVASSIAAAFPHIQCTVFDLPHVVADLQGGNNLNFVGGDMFVDVPATEVVLLKWILHDWNDEESVKILKKCKEAISKSNKKGGKVIIIDMKVENEKDEDDESYETQLFFDMLMMALVTGRERNEKEWAKLFKDAGFSNYKITPILGLRSLIEVYP</sequence>
<gene>
    <name evidence="3" type="primary">OMT3</name>
</gene>
<reference key="1">
    <citation type="journal article" date="2008" name="Plant Cell">
        <title>EST analysis of hop glandular trichomes identifies an O-methyltransferase that catalyzes the biosynthesis of xanthohumol.</title>
        <authorList>
            <person name="Nagel J."/>
            <person name="Culley L.K."/>
            <person name="Lu Y."/>
            <person name="Liu E."/>
            <person name="Matthews P.D."/>
            <person name="Stevens J.F."/>
            <person name="Page J.E."/>
        </authorList>
    </citation>
    <scope>NUCLEOTIDE SEQUENCE [MRNA]</scope>
    <scope>TISSUE SPECIFICITY</scope>
    <source>
        <tissue>Lupulin gland</tissue>
    </source>
</reference>
<evidence type="ECO:0000255" key="1">
    <source>
        <dbReference type="PROSITE-ProRule" id="PRU01020"/>
    </source>
</evidence>
<evidence type="ECO:0000269" key="2">
    <source>
    </source>
</evidence>
<evidence type="ECO:0000303" key="3">
    <source>
    </source>
</evidence>
<evidence type="ECO:0000305" key="4"/>
<evidence type="ECO:0000312" key="5">
    <source>
        <dbReference type="EMBL" id="ABZ89567.1"/>
    </source>
</evidence>
<dbReference type="EC" id="2.1.1.-" evidence="4"/>
<dbReference type="EMBL" id="EU309727">
    <property type="protein sequence ID" value="ABZ89567.1"/>
    <property type="molecule type" value="mRNA"/>
</dbReference>
<dbReference type="SMR" id="B0ZB57"/>
<dbReference type="GO" id="GO:0008171">
    <property type="term" value="F:O-methyltransferase activity"/>
    <property type="evidence" value="ECO:0007669"/>
    <property type="project" value="InterPro"/>
</dbReference>
<dbReference type="GO" id="GO:0046983">
    <property type="term" value="F:protein dimerization activity"/>
    <property type="evidence" value="ECO:0007669"/>
    <property type="project" value="InterPro"/>
</dbReference>
<dbReference type="GO" id="GO:0032259">
    <property type="term" value="P:methylation"/>
    <property type="evidence" value="ECO:0007669"/>
    <property type="project" value="UniProtKB-KW"/>
</dbReference>
<dbReference type="CDD" id="cd02440">
    <property type="entry name" value="AdoMet_MTases"/>
    <property type="match status" value="1"/>
</dbReference>
<dbReference type="FunFam" id="1.10.10.10:FF:000213">
    <property type="entry name" value="Coniferyl alcohol 9-O-methyltransferase"/>
    <property type="match status" value="1"/>
</dbReference>
<dbReference type="FunFam" id="3.40.50.150:FF:000057">
    <property type="entry name" value="O-methyltransferase ZRP4"/>
    <property type="match status" value="1"/>
</dbReference>
<dbReference type="Gene3D" id="3.40.50.150">
    <property type="entry name" value="Vaccinia Virus protein VP39"/>
    <property type="match status" value="1"/>
</dbReference>
<dbReference type="Gene3D" id="1.10.10.10">
    <property type="entry name" value="Winged helix-like DNA-binding domain superfamily/Winged helix DNA-binding domain"/>
    <property type="match status" value="1"/>
</dbReference>
<dbReference type="InterPro" id="IPR016461">
    <property type="entry name" value="COMT-like"/>
</dbReference>
<dbReference type="InterPro" id="IPR001077">
    <property type="entry name" value="O_MeTrfase_dom"/>
</dbReference>
<dbReference type="InterPro" id="IPR012967">
    <property type="entry name" value="Plant_O-MeTrfase_dimerisation"/>
</dbReference>
<dbReference type="InterPro" id="IPR029063">
    <property type="entry name" value="SAM-dependent_MTases_sf"/>
</dbReference>
<dbReference type="InterPro" id="IPR036388">
    <property type="entry name" value="WH-like_DNA-bd_sf"/>
</dbReference>
<dbReference type="InterPro" id="IPR036390">
    <property type="entry name" value="WH_DNA-bd_sf"/>
</dbReference>
<dbReference type="PANTHER" id="PTHR11746">
    <property type="entry name" value="O-METHYLTRANSFERASE"/>
    <property type="match status" value="1"/>
</dbReference>
<dbReference type="Pfam" id="PF08100">
    <property type="entry name" value="Dimerisation"/>
    <property type="match status" value="1"/>
</dbReference>
<dbReference type="Pfam" id="PF00891">
    <property type="entry name" value="Methyltransf_2"/>
    <property type="match status" value="1"/>
</dbReference>
<dbReference type="PIRSF" id="PIRSF005739">
    <property type="entry name" value="O-mtase"/>
    <property type="match status" value="1"/>
</dbReference>
<dbReference type="SUPFAM" id="SSF53335">
    <property type="entry name" value="S-adenosyl-L-methionine-dependent methyltransferases"/>
    <property type="match status" value="1"/>
</dbReference>
<dbReference type="SUPFAM" id="SSF46785">
    <property type="entry name" value="Winged helix' DNA-binding domain"/>
    <property type="match status" value="1"/>
</dbReference>
<dbReference type="PROSITE" id="PS51683">
    <property type="entry name" value="SAM_OMT_II"/>
    <property type="match status" value="1"/>
</dbReference>
<accession>B0ZB57</accession>
<protein>
    <recommendedName>
        <fullName evidence="3">Probable O-methyltransferase 3</fullName>
        <shortName evidence="3">HlOMT3</shortName>
        <ecNumber evidence="4">2.1.1.-</ecNumber>
    </recommendedName>
</protein>
<organism evidence="5">
    <name type="scientific">Humulus lupulus</name>
    <name type="common">European hop</name>
    <dbReference type="NCBI Taxonomy" id="3486"/>
    <lineage>
        <taxon>Eukaryota</taxon>
        <taxon>Viridiplantae</taxon>
        <taxon>Streptophyta</taxon>
        <taxon>Embryophyta</taxon>
        <taxon>Tracheophyta</taxon>
        <taxon>Spermatophyta</taxon>
        <taxon>Magnoliopsida</taxon>
        <taxon>eudicotyledons</taxon>
        <taxon>Gunneridae</taxon>
        <taxon>Pentapetalae</taxon>
        <taxon>rosids</taxon>
        <taxon>fabids</taxon>
        <taxon>Rosales</taxon>
        <taxon>Cannabaceae</taxon>
        <taxon>Humulus</taxon>
    </lineage>
</organism>